<evidence type="ECO:0000255" key="1">
    <source>
        <dbReference type="HAMAP-Rule" id="MF_01458"/>
    </source>
</evidence>
<evidence type="ECO:0000256" key="2">
    <source>
        <dbReference type="SAM" id="MobiDB-lite"/>
    </source>
</evidence>
<reference key="1">
    <citation type="journal article" date="2009" name="Stand. Genomic Sci.">
        <title>Complete genome sequence of Slackia heliotrinireducens type strain (RHS 1).</title>
        <authorList>
            <person name="Pukall R."/>
            <person name="Lapidus A."/>
            <person name="Nolan M."/>
            <person name="Copeland A."/>
            <person name="Glavina Del Rio T."/>
            <person name="Lucas S."/>
            <person name="Chen F."/>
            <person name="Tice H."/>
            <person name="Cheng J.F."/>
            <person name="Chertkov O."/>
            <person name="Bruce D."/>
            <person name="Goodwin L."/>
            <person name="Kuske C."/>
            <person name="Brettin T."/>
            <person name="Detter J.C."/>
            <person name="Han C."/>
            <person name="Pitluck S."/>
            <person name="Pati A."/>
            <person name="Mavrommatis K."/>
            <person name="Ivanova N."/>
            <person name="Ovchinnikova G."/>
            <person name="Chen A."/>
            <person name="Palaniappan K."/>
            <person name="Schneider S."/>
            <person name="Rohde M."/>
            <person name="Chain P."/>
            <person name="D'haeseleer P."/>
            <person name="Goker M."/>
            <person name="Bristow J."/>
            <person name="Eisen J.A."/>
            <person name="Markowitz V."/>
            <person name="Kyrpides N.C."/>
            <person name="Klenk H.P."/>
            <person name="Hugenholtz P."/>
        </authorList>
    </citation>
    <scope>NUCLEOTIDE SEQUENCE [LARGE SCALE GENOMIC DNA]</scope>
    <source>
        <strain>ATCC 29202 / DSM 20476 / NCTC 11029 / RHS 1</strain>
    </source>
</reference>
<name>FTSH_SLAHD</name>
<feature type="chain" id="PRO_0000400390" description="ATP-dependent zinc metalloprotease FtsH">
    <location>
        <begin position="1"/>
        <end position="783"/>
    </location>
</feature>
<feature type="topological domain" description="Cytoplasmic" evidence="1">
    <location>
        <begin position="1"/>
        <end position="86"/>
    </location>
</feature>
<feature type="transmembrane region" description="Helical" evidence="1">
    <location>
        <begin position="87"/>
        <end position="107"/>
    </location>
</feature>
<feature type="topological domain" description="Extracellular" evidence="1">
    <location>
        <begin position="108"/>
        <end position="233"/>
    </location>
</feature>
<feature type="transmembrane region" description="Helical" evidence="1">
    <location>
        <begin position="234"/>
        <end position="254"/>
    </location>
</feature>
<feature type="topological domain" description="Cytoplasmic" evidence="1">
    <location>
        <begin position="255"/>
        <end position="783"/>
    </location>
</feature>
<feature type="region of interest" description="Disordered" evidence="2">
    <location>
        <begin position="1"/>
        <end position="79"/>
    </location>
</feature>
<feature type="region of interest" description="Disordered" evidence="2">
    <location>
        <begin position="738"/>
        <end position="783"/>
    </location>
</feature>
<feature type="compositionally biased region" description="Low complexity" evidence="2">
    <location>
        <begin position="1"/>
        <end position="16"/>
    </location>
</feature>
<feature type="compositionally biased region" description="Basic and acidic residues" evidence="2">
    <location>
        <begin position="35"/>
        <end position="61"/>
    </location>
</feature>
<feature type="compositionally biased region" description="Low complexity" evidence="2">
    <location>
        <begin position="738"/>
        <end position="771"/>
    </location>
</feature>
<feature type="compositionally biased region" description="Pro residues" evidence="2">
    <location>
        <begin position="772"/>
        <end position="783"/>
    </location>
</feature>
<feature type="active site" evidence="1">
    <location>
        <position position="548"/>
    </location>
</feature>
<feature type="binding site" evidence="1">
    <location>
        <begin position="325"/>
        <end position="332"/>
    </location>
    <ligand>
        <name>ATP</name>
        <dbReference type="ChEBI" id="CHEBI:30616"/>
    </ligand>
</feature>
<feature type="binding site" evidence="1">
    <location>
        <position position="547"/>
    </location>
    <ligand>
        <name>Zn(2+)</name>
        <dbReference type="ChEBI" id="CHEBI:29105"/>
        <note>catalytic</note>
    </ligand>
</feature>
<feature type="binding site" evidence="1">
    <location>
        <position position="551"/>
    </location>
    <ligand>
        <name>Zn(2+)</name>
        <dbReference type="ChEBI" id="CHEBI:29105"/>
        <note>catalytic</note>
    </ligand>
</feature>
<feature type="binding site" evidence="1">
    <location>
        <position position="623"/>
    </location>
    <ligand>
        <name>Zn(2+)</name>
        <dbReference type="ChEBI" id="CHEBI:29105"/>
        <note>catalytic</note>
    </ligand>
</feature>
<protein>
    <recommendedName>
        <fullName evidence="1">ATP-dependent zinc metalloprotease FtsH</fullName>
        <ecNumber evidence="1">3.4.24.-</ecNumber>
    </recommendedName>
</protein>
<proteinExistence type="inferred from homology"/>
<sequence>MSETPNTNEQNNPNNQQDGTGQNPMPPMPTGKPQMPERPERHNQADGAPKRPGDDDRKSERPTWLSEFSDKEEDFASRLNTRPPQRASIITIIIIFLVAFFIGSQMMNMVHGEETDDLTTSEFVQAVEQGRVENVVYNAGEYTVTGKYYPAATAGSTIAESYNSAIESVDVKLGTILEPSNPSSVGIETTSLEEKTLGTERNYTATYVGQDSLMELLSAHPEVEYQVTLPSNVTEILISVLPMLLFAGLLIYFFSQMSKANNSQMSFGKAKAKKTTEERPDVRFSDVAGEDEAVEELQEIKDFLVNPGKYQKLGAKIPRGCLLVGPPGTGKTLLARAVAGEANVPFFSISGSEFVEMFVGVGASRVRNLFEQAKEAAPSIIFIDEIDAVGRQRGTGLGGGHDEREQTLNQLLVEMDGFEKNDAVVLIAATNRVDVLDPALLRPGRFDRQIVVDGPDVKGRVKILEVHAKNKPIGEDVDLERIAKLTSGMTGADLMNLMNEAALLTARRNKDKIGMDEVNESMERLMAGPERKTRVLNEKTRRTIAYHESGHALVGHMLENADPVHKITIVPRGMALGYTMSIPDEDKFLVSRSAMLDELAVFMGGRVAEEIFCGDITTGASNDLERATKTARKMVVSYGMSEALGQQTFGQPNHEVFLGRDYGNTQDYSPETAQRIDEEVARLMKEAHDTAYEILSARQEQMHTMAKVLLERETVDGEECQALLNNTWDEFLAKKQAEAAAKAADQAEQPQVEAEPVAQVATPAAPVAPAVPEAPQPPAAPQQ</sequence>
<organism>
    <name type="scientific">Slackia heliotrinireducens (strain ATCC 29202 / DSM 20476 / NCTC 11029 / RHS 1)</name>
    <name type="common">Peptococcus heliotrinreducens</name>
    <dbReference type="NCBI Taxonomy" id="471855"/>
    <lineage>
        <taxon>Bacteria</taxon>
        <taxon>Bacillati</taxon>
        <taxon>Actinomycetota</taxon>
        <taxon>Coriobacteriia</taxon>
        <taxon>Eggerthellales</taxon>
        <taxon>Eggerthellaceae</taxon>
        <taxon>Slackia</taxon>
    </lineage>
</organism>
<accession>C7N1I1</accession>
<keyword id="KW-0067">ATP-binding</keyword>
<keyword id="KW-1003">Cell membrane</keyword>
<keyword id="KW-0378">Hydrolase</keyword>
<keyword id="KW-0472">Membrane</keyword>
<keyword id="KW-0479">Metal-binding</keyword>
<keyword id="KW-0482">Metalloprotease</keyword>
<keyword id="KW-0547">Nucleotide-binding</keyword>
<keyword id="KW-0645">Protease</keyword>
<keyword id="KW-1185">Reference proteome</keyword>
<keyword id="KW-0812">Transmembrane</keyword>
<keyword id="KW-1133">Transmembrane helix</keyword>
<keyword id="KW-0862">Zinc</keyword>
<dbReference type="EC" id="3.4.24.-" evidence="1"/>
<dbReference type="EMBL" id="CP001684">
    <property type="protein sequence ID" value="ACV21273.1"/>
    <property type="molecule type" value="Genomic_DNA"/>
</dbReference>
<dbReference type="RefSeq" id="WP_012797384.1">
    <property type="nucleotide sequence ID" value="NC_013165.1"/>
</dbReference>
<dbReference type="SMR" id="C7N1I1"/>
<dbReference type="STRING" id="471855.Shel_02030"/>
<dbReference type="KEGG" id="shi:Shel_02030"/>
<dbReference type="eggNOG" id="COG0465">
    <property type="taxonomic scope" value="Bacteria"/>
</dbReference>
<dbReference type="HOGENOM" id="CLU_000688_16_2_11"/>
<dbReference type="Proteomes" id="UP000002026">
    <property type="component" value="Chromosome"/>
</dbReference>
<dbReference type="GO" id="GO:0005886">
    <property type="term" value="C:plasma membrane"/>
    <property type="evidence" value="ECO:0007669"/>
    <property type="project" value="UniProtKB-SubCell"/>
</dbReference>
<dbReference type="GO" id="GO:0005524">
    <property type="term" value="F:ATP binding"/>
    <property type="evidence" value="ECO:0007669"/>
    <property type="project" value="UniProtKB-UniRule"/>
</dbReference>
<dbReference type="GO" id="GO:0016887">
    <property type="term" value="F:ATP hydrolysis activity"/>
    <property type="evidence" value="ECO:0007669"/>
    <property type="project" value="UniProtKB-UniRule"/>
</dbReference>
<dbReference type="GO" id="GO:0004176">
    <property type="term" value="F:ATP-dependent peptidase activity"/>
    <property type="evidence" value="ECO:0007669"/>
    <property type="project" value="InterPro"/>
</dbReference>
<dbReference type="GO" id="GO:0004222">
    <property type="term" value="F:metalloendopeptidase activity"/>
    <property type="evidence" value="ECO:0007669"/>
    <property type="project" value="InterPro"/>
</dbReference>
<dbReference type="GO" id="GO:0008270">
    <property type="term" value="F:zinc ion binding"/>
    <property type="evidence" value="ECO:0007669"/>
    <property type="project" value="UniProtKB-UniRule"/>
</dbReference>
<dbReference type="GO" id="GO:0030163">
    <property type="term" value="P:protein catabolic process"/>
    <property type="evidence" value="ECO:0007669"/>
    <property type="project" value="UniProtKB-UniRule"/>
</dbReference>
<dbReference type="GO" id="GO:0006508">
    <property type="term" value="P:proteolysis"/>
    <property type="evidence" value="ECO:0007669"/>
    <property type="project" value="UniProtKB-KW"/>
</dbReference>
<dbReference type="CDD" id="cd19501">
    <property type="entry name" value="RecA-like_FtsH"/>
    <property type="match status" value="1"/>
</dbReference>
<dbReference type="FunFam" id="1.10.8.60:FF:000001">
    <property type="entry name" value="ATP-dependent zinc metalloprotease FtsH"/>
    <property type="match status" value="1"/>
</dbReference>
<dbReference type="FunFam" id="1.20.58.760:FF:000001">
    <property type="entry name" value="ATP-dependent zinc metalloprotease FtsH"/>
    <property type="match status" value="1"/>
</dbReference>
<dbReference type="FunFam" id="3.40.50.300:FF:000001">
    <property type="entry name" value="ATP-dependent zinc metalloprotease FtsH"/>
    <property type="match status" value="1"/>
</dbReference>
<dbReference type="Gene3D" id="1.10.8.60">
    <property type="match status" value="1"/>
</dbReference>
<dbReference type="Gene3D" id="3.40.50.300">
    <property type="entry name" value="P-loop containing nucleotide triphosphate hydrolases"/>
    <property type="match status" value="1"/>
</dbReference>
<dbReference type="Gene3D" id="1.20.58.760">
    <property type="entry name" value="Peptidase M41"/>
    <property type="match status" value="1"/>
</dbReference>
<dbReference type="HAMAP" id="MF_01458">
    <property type="entry name" value="FtsH"/>
    <property type="match status" value="1"/>
</dbReference>
<dbReference type="InterPro" id="IPR003593">
    <property type="entry name" value="AAA+_ATPase"/>
</dbReference>
<dbReference type="InterPro" id="IPR041569">
    <property type="entry name" value="AAA_lid_3"/>
</dbReference>
<dbReference type="InterPro" id="IPR003959">
    <property type="entry name" value="ATPase_AAA_core"/>
</dbReference>
<dbReference type="InterPro" id="IPR003960">
    <property type="entry name" value="ATPase_AAA_CS"/>
</dbReference>
<dbReference type="InterPro" id="IPR005936">
    <property type="entry name" value="FtsH"/>
</dbReference>
<dbReference type="InterPro" id="IPR027417">
    <property type="entry name" value="P-loop_NTPase"/>
</dbReference>
<dbReference type="InterPro" id="IPR011546">
    <property type="entry name" value="Pept_M41_FtsH_extracell"/>
</dbReference>
<dbReference type="InterPro" id="IPR000642">
    <property type="entry name" value="Peptidase_M41"/>
</dbReference>
<dbReference type="InterPro" id="IPR037219">
    <property type="entry name" value="Peptidase_M41-like"/>
</dbReference>
<dbReference type="NCBIfam" id="TIGR01241">
    <property type="entry name" value="FtsH_fam"/>
    <property type="match status" value="1"/>
</dbReference>
<dbReference type="PANTHER" id="PTHR23076:SF97">
    <property type="entry name" value="ATP-DEPENDENT ZINC METALLOPROTEASE YME1L1"/>
    <property type="match status" value="1"/>
</dbReference>
<dbReference type="PANTHER" id="PTHR23076">
    <property type="entry name" value="METALLOPROTEASE M41 FTSH"/>
    <property type="match status" value="1"/>
</dbReference>
<dbReference type="Pfam" id="PF00004">
    <property type="entry name" value="AAA"/>
    <property type="match status" value="1"/>
</dbReference>
<dbReference type="Pfam" id="PF17862">
    <property type="entry name" value="AAA_lid_3"/>
    <property type="match status" value="1"/>
</dbReference>
<dbReference type="Pfam" id="PF06480">
    <property type="entry name" value="FtsH_ext"/>
    <property type="match status" value="1"/>
</dbReference>
<dbReference type="Pfam" id="PF01434">
    <property type="entry name" value="Peptidase_M41"/>
    <property type="match status" value="1"/>
</dbReference>
<dbReference type="SMART" id="SM00382">
    <property type="entry name" value="AAA"/>
    <property type="match status" value="1"/>
</dbReference>
<dbReference type="SUPFAM" id="SSF140990">
    <property type="entry name" value="FtsH protease domain-like"/>
    <property type="match status" value="1"/>
</dbReference>
<dbReference type="SUPFAM" id="SSF52540">
    <property type="entry name" value="P-loop containing nucleoside triphosphate hydrolases"/>
    <property type="match status" value="1"/>
</dbReference>
<dbReference type="PROSITE" id="PS00674">
    <property type="entry name" value="AAA"/>
    <property type="match status" value="1"/>
</dbReference>
<gene>
    <name evidence="1" type="primary">ftsH</name>
    <name type="ordered locus">Shel_02030</name>
</gene>
<comment type="function">
    <text evidence="1">Acts as a processive, ATP-dependent zinc metallopeptidase for both cytoplasmic and membrane proteins. Plays a role in the quality control of integral membrane proteins.</text>
</comment>
<comment type="cofactor">
    <cofactor evidence="1">
        <name>Zn(2+)</name>
        <dbReference type="ChEBI" id="CHEBI:29105"/>
    </cofactor>
    <text evidence="1">Binds 1 zinc ion per subunit.</text>
</comment>
<comment type="subunit">
    <text evidence="1">Homohexamer.</text>
</comment>
<comment type="subcellular location">
    <subcellularLocation>
        <location evidence="1">Cell membrane</location>
        <topology evidence="1">Multi-pass membrane protein</topology>
        <orientation evidence="1">Cytoplasmic side</orientation>
    </subcellularLocation>
</comment>
<comment type="similarity">
    <text evidence="1">In the central section; belongs to the AAA ATPase family.</text>
</comment>
<comment type="similarity">
    <text evidence="1">In the C-terminal section; belongs to the peptidase M41 family.</text>
</comment>